<name>MSRB_ECOLU</name>
<gene>
    <name evidence="1" type="primary">msrB</name>
    <name type="ordered locus">ECUMN_2067</name>
</gene>
<organism>
    <name type="scientific">Escherichia coli O17:K52:H18 (strain UMN026 / ExPEC)</name>
    <dbReference type="NCBI Taxonomy" id="585056"/>
    <lineage>
        <taxon>Bacteria</taxon>
        <taxon>Pseudomonadati</taxon>
        <taxon>Pseudomonadota</taxon>
        <taxon>Gammaproteobacteria</taxon>
        <taxon>Enterobacterales</taxon>
        <taxon>Enterobacteriaceae</taxon>
        <taxon>Escherichia</taxon>
    </lineage>
</organism>
<protein>
    <recommendedName>
        <fullName evidence="1">Peptide methionine sulfoxide reductase MsrB</fullName>
        <ecNumber evidence="1">1.8.4.12</ecNumber>
    </recommendedName>
    <alternativeName>
        <fullName evidence="1">Peptide-methionine (R)-S-oxide reductase</fullName>
    </alternativeName>
</protein>
<comment type="catalytic activity">
    <reaction evidence="1">
        <text>L-methionyl-[protein] + [thioredoxin]-disulfide + H2O = L-methionyl-(R)-S-oxide-[protein] + [thioredoxin]-dithiol</text>
        <dbReference type="Rhea" id="RHEA:24164"/>
        <dbReference type="Rhea" id="RHEA-COMP:10698"/>
        <dbReference type="Rhea" id="RHEA-COMP:10700"/>
        <dbReference type="Rhea" id="RHEA-COMP:12313"/>
        <dbReference type="Rhea" id="RHEA-COMP:12314"/>
        <dbReference type="ChEBI" id="CHEBI:15377"/>
        <dbReference type="ChEBI" id="CHEBI:16044"/>
        <dbReference type="ChEBI" id="CHEBI:29950"/>
        <dbReference type="ChEBI" id="CHEBI:45764"/>
        <dbReference type="ChEBI" id="CHEBI:50058"/>
        <dbReference type="EC" id="1.8.4.12"/>
    </reaction>
</comment>
<comment type="cofactor">
    <cofactor evidence="1">
        <name>Zn(2+)</name>
        <dbReference type="ChEBI" id="CHEBI:29105"/>
    </cofactor>
    <text evidence="1">Binds 1 zinc ion per subunit. The zinc ion is important for the structural integrity of the protein.</text>
</comment>
<comment type="similarity">
    <text evidence="1">Belongs to the MsrB Met sulfoxide reductase family.</text>
</comment>
<accession>B7N5B4</accession>
<feature type="chain" id="PRO_1000145369" description="Peptide methionine sulfoxide reductase MsrB">
    <location>
        <begin position="1"/>
        <end position="137"/>
    </location>
</feature>
<feature type="domain" description="MsrB" evidence="2">
    <location>
        <begin position="7"/>
        <end position="129"/>
    </location>
</feature>
<feature type="active site" description="Nucleophile" evidence="2">
    <location>
        <position position="118"/>
    </location>
</feature>
<feature type="binding site" evidence="2">
    <location>
        <position position="46"/>
    </location>
    <ligand>
        <name>Zn(2+)</name>
        <dbReference type="ChEBI" id="CHEBI:29105"/>
    </ligand>
</feature>
<feature type="binding site" evidence="2">
    <location>
        <position position="49"/>
    </location>
    <ligand>
        <name>Zn(2+)</name>
        <dbReference type="ChEBI" id="CHEBI:29105"/>
    </ligand>
</feature>
<feature type="binding site" evidence="2">
    <location>
        <position position="95"/>
    </location>
    <ligand>
        <name>Zn(2+)</name>
        <dbReference type="ChEBI" id="CHEBI:29105"/>
    </ligand>
</feature>
<feature type="binding site" evidence="2">
    <location>
        <position position="98"/>
    </location>
    <ligand>
        <name>Zn(2+)</name>
        <dbReference type="ChEBI" id="CHEBI:29105"/>
    </ligand>
</feature>
<proteinExistence type="inferred from homology"/>
<dbReference type="EC" id="1.8.4.12" evidence="1"/>
<dbReference type="EMBL" id="CU928163">
    <property type="protein sequence ID" value="CAR13263.1"/>
    <property type="molecule type" value="Genomic_DNA"/>
</dbReference>
<dbReference type="RefSeq" id="WP_001284618.1">
    <property type="nucleotide sequence ID" value="NC_011751.1"/>
</dbReference>
<dbReference type="RefSeq" id="YP_002412795.1">
    <property type="nucleotide sequence ID" value="NC_011751.1"/>
</dbReference>
<dbReference type="SMR" id="B7N5B4"/>
<dbReference type="STRING" id="585056.ECUMN_2067"/>
<dbReference type="GeneID" id="93775987"/>
<dbReference type="KEGG" id="eum:ECUMN_2067"/>
<dbReference type="PATRIC" id="fig|585056.7.peg.2254"/>
<dbReference type="HOGENOM" id="CLU_031040_8_5_6"/>
<dbReference type="Proteomes" id="UP000007097">
    <property type="component" value="Chromosome"/>
</dbReference>
<dbReference type="GO" id="GO:0005737">
    <property type="term" value="C:cytoplasm"/>
    <property type="evidence" value="ECO:0007669"/>
    <property type="project" value="TreeGrafter"/>
</dbReference>
<dbReference type="GO" id="GO:0033743">
    <property type="term" value="F:peptide-methionine (R)-S-oxide reductase activity"/>
    <property type="evidence" value="ECO:0007669"/>
    <property type="project" value="UniProtKB-UniRule"/>
</dbReference>
<dbReference type="GO" id="GO:0008270">
    <property type="term" value="F:zinc ion binding"/>
    <property type="evidence" value="ECO:0007669"/>
    <property type="project" value="UniProtKB-UniRule"/>
</dbReference>
<dbReference type="GO" id="GO:0030091">
    <property type="term" value="P:protein repair"/>
    <property type="evidence" value="ECO:0007669"/>
    <property type="project" value="InterPro"/>
</dbReference>
<dbReference type="GO" id="GO:0006979">
    <property type="term" value="P:response to oxidative stress"/>
    <property type="evidence" value="ECO:0007669"/>
    <property type="project" value="InterPro"/>
</dbReference>
<dbReference type="FunFam" id="2.170.150.20:FF:000001">
    <property type="entry name" value="Peptide methionine sulfoxide reductase MsrB"/>
    <property type="match status" value="1"/>
</dbReference>
<dbReference type="Gene3D" id="2.170.150.20">
    <property type="entry name" value="Peptide methionine sulfoxide reductase"/>
    <property type="match status" value="1"/>
</dbReference>
<dbReference type="HAMAP" id="MF_01400">
    <property type="entry name" value="MsrB"/>
    <property type="match status" value="1"/>
</dbReference>
<dbReference type="InterPro" id="IPR028427">
    <property type="entry name" value="Met_Sox_Rdtase_MsrB"/>
</dbReference>
<dbReference type="InterPro" id="IPR002579">
    <property type="entry name" value="Met_Sox_Rdtase_MsrB_dom"/>
</dbReference>
<dbReference type="InterPro" id="IPR011057">
    <property type="entry name" value="Mss4-like_sf"/>
</dbReference>
<dbReference type="NCBIfam" id="TIGR00357">
    <property type="entry name" value="peptide-methionine (R)-S-oxide reductase MsrB"/>
    <property type="match status" value="1"/>
</dbReference>
<dbReference type="PANTHER" id="PTHR10173">
    <property type="entry name" value="METHIONINE SULFOXIDE REDUCTASE"/>
    <property type="match status" value="1"/>
</dbReference>
<dbReference type="PANTHER" id="PTHR10173:SF52">
    <property type="entry name" value="METHIONINE-R-SULFOXIDE REDUCTASE B1"/>
    <property type="match status" value="1"/>
</dbReference>
<dbReference type="Pfam" id="PF01641">
    <property type="entry name" value="SelR"/>
    <property type="match status" value="1"/>
</dbReference>
<dbReference type="SUPFAM" id="SSF51316">
    <property type="entry name" value="Mss4-like"/>
    <property type="match status" value="1"/>
</dbReference>
<dbReference type="PROSITE" id="PS51790">
    <property type="entry name" value="MSRB"/>
    <property type="match status" value="1"/>
</dbReference>
<reference key="1">
    <citation type="journal article" date="2009" name="PLoS Genet.">
        <title>Organised genome dynamics in the Escherichia coli species results in highly diverse adaptive paths.</title>
        <authorList>
            <person name="Touchon M."/>
            <person name="Hoede C."/>
            <person name="Tenaillon O."/>
            <person name="Barbe V."/>
            <person name="Baeriswyl S."/>
            <person name="Bidet P."/>
            <person name="Bingen E."/>
            <person name="Bonacorsi S."/>
            <person name="Bouchier C."/>
            <person name="Bouvet O."/>
            <person name="Calteau A."/>
            <person name="Chiapello H."/>
            <person name="Clermont O."/>
            <person name="Cruveiller S."/>
            <person name="Danchin A."/>
            <person name="Diard M."/>
            <person name="Dossat C."/>
            <person name="Karoui M.E."/>
            <person name="Frapy E."/>
            <person name="Garry L."/>
            <person name="Ghigo J.M."/>
            <person name="Gilles A.M."/>
            <person name="Johnson J."/>
            <person name="Le Bouguenec C."/>
            <person name="Lescat M."/>
            <person name="Mangenot S."/>
            <person name="Martinez-Jehanne V."/>
            <person name="Matic I."/>
            <person name="Nassif X."/>
            <person name="Oztas S."/>
            <person name="Petit M.A."/>
            <person name="Pichon C."/>
            <person name="Rouy Z."/>
            <person name="Ruf C.S."/>
            <person name="Schneider D."/>
            <person name="Tourret J."/>
            <person name="Vacherie B."/>
            <person name="Vallenet D."/>
            <person name="Medigue C."/>
            <person name="Rocha E.P.C."/>
            <person name="Denamur E."/>
        </authorList>
    </citation>
    <scope>NUCLEOTIDE SEQUENCE [LARGE SCALE GENOMIC DNA]</scope>
    <source>
        <strain>UMN026 / ExPEC</strain>
    </source>
</reference>
<sequence>MANKPSAEELKKNLSEMQFYVTQNHGTEPPFTGRLLHNKRDGVYHCLICDAPLFHSQTKYDSGCGWPSFYEPVSEESIRYIKDLSHGMQRIEIRCGNCDAHLGHVFPDGPQPTGERYCVNSASLRFTDGENGEEING</sequence>
<keyword id="KW-0479">Metal-binding</keyword>
<keyword id="KW-0560">Oxidoreductase</keyword>
<keyword id="KW-0862">Zinc</keyword>
<evidence type="ECO:0000255" key="1">
    <source>
        <dbReference type="HAMAP-Rule" id="MF_01400"/>
    </source>
</evidence>
<evidence type="ECO:0000255" key="2">
    <source>
        <dbReference type="PROSITE-ProRule" id="PRU01126"/>
    </source>
</evidence>